<dbReference type="EC" id="3.2.1.22"/>
<dbReference type="EMBL" id="DS027049">
    <property type="protein sequence ID" value="EAW13236.1"/>
    <property type="molecule type" value="Genomic_DNA"/>
</dbReference>
<dbReference type="RefSeq" id="XP_001274662.1">
    <property type="nucleotide sequence ID" value="XM_001274661.1"/>
</dbReference>
<dbReference type="SMR" id="A1CBW8"/>
<dbReference type="STRING" id="344612.A1CBW8"/>
<dbReference type="GlyCosmos" id="A1CBW8">
    <property type="glycosylation" value="4 sites, No reported glycans"/>
</dbReference>
<dbReference type="EnsemblFungi" id="EAW13236">
    <property type="protein sequence ID" value="EAW13236"/>
    <property type="gene ID" value="ACLA_016820"/>
</dbReference>
<dbReference type="GeneID" id="4706882"/>
<dbReference type="KEGG" id="act:ACLA_016820"/>
<dbReference type="VEuPathDB" id="FungiDB:ACLA_016820"/>
<dbReference type="eggNOG" id="KOG2366">
    <property type="taxonomic scope" value="Eukaryota"/>
</dbReference>
<dbReference type="HOGENOM" id="CLU_013093_3_3_1"/>
<dbReference type="OMA" id="NWARFMC"/>
<dbReference type="OrthoDB" id="5795902at2759"/>
<dbReference type="Proteomes" id="UP000006701">
    <property type="component" value="Unassembled WGS sequence"/>
</dbReference>
<dbReference type="GO" id="GO:0005576">
    <property type="term" value="C:extracellular region"/>
    <property type="evidence" value="ECO:0007669"/>
    <property type="project" value="UniProtKB-SubCell"/>
</dbReference>
<dbReference type="GO" id="GO:0004557">
    <property type="term" value="F:alpha-galactosidase activity"/>
    <property type="evidence" value="ECO:0007669"/>
    <property type="project" value="UniProtKB-EC"/>
</dbReference>
<dbReference type="GO" id="GO:0030246">
    <property type="term" value="F:carbohydrate binding"/>
    <property type="evidence" value="ECO:0007669"/>
    <property type="project" value="UniProtKB-KW"/>
</dbReference>
<dbReference type="GO" id="GO:0005975">
    <property type="term" value="P:carbohydrate metabolic process"/>
    <property type="evidence" value="ECO:0007669"/>
    <property type="project" value="InterPro"/>
</dbReference>
<dbReference type="CDD" id="cd23425">
    <property type="entry name" value="beta-trefoil_Ricin_AglA"/>
    <property type="match status" value="1"/>
</dbReference>
<dbReference type="CDD" id="cd14792">
    <property type="entry name" value="GH27"/>
    <property type="match status" value="1"/>
</dbReference>
<dbReference type="FunFam" id="3.20.20.70:FF:000177">
    <property type="entry name" value="Alpha-galactosidase"/>
    <property type="match status" value="1"/>
</dbReference>
<dbReference type="Gene3D" id="2.80.10.50">
    <property type="match status" value="1"/>
</dbReference>
<dbReference type="Gene3D" id="3.20.20.70">
    <property type="entry name" value="Aldolase class I"/>
    <property type="match status" value="1"/>
</dbReference>
<dbReference type="Gene3D" id="2.60.40.1180">
    <property type="entry name" value="Golgi alpha-mannosidase II"/>
    <property type="match status" value="1"/>
</dbReference>
<dbReference type="InterPro" id="IPR013785">
    <property type="entry name" value="Aldolase_TIM"/>
</dbReference>
<dbReference type="InterPro" id="IPR002241">
    <property type="entry name" value="Glyco_hydro_27"/>
</dbReference>
<dbReference type="InterPro" id="IPR013780">
    <property type="entry name" value="Glyco_hydro_b"/>
</dbReference>
<dbReference type="InterPro" id="IPR017853">
    <property type="entry name" value="Glycoside_hydrolase_SF"/>
</dbReference>
<dbReference type="InterPro" id="IPR041233">
    <property type="entry name" value="Melibiase_C"/>
</dbReference>
<dbReference type="InterPro" id="IPR035992">
    <property type="entry name" value="Ricin_B-like_lectins"/>
</dbReference>
<dbReference type="InterPro" id="IPR000772">
    <property type="entry name" value="Ricin_B_lectin"/>
</dbReference>
<dbReference type="PANTHER" id="PTHR11452:SF91">
    <property type="entry name" value="ALPHA-GALACTOSIDASE A-RELATED"/>
    <property type="match status" value="1"/>
</dbReference>
<dbReference type="PANTHER" id="PTHR11452">
    <property type="entry name" value="ALPHA-GALACTOSIDASE/ALPHA-N-ACETYLGALACTOSAMINIDASE"/>
    <property type="match status" value="1"/>
</dbReference>
<dbReference type="Pfam" id="PF16499">
    <property type="entry name" value="Melibiase_2"/>
    <property type="match status" value="1"/>
</dbReference>
<dbReference type="Pfam" id="PF17801">
    <property type="entry name" value="Melibiase_C"/>
    <property type="match status" value="1"/>
</dbReference>
<dbReference type="Pfam" id="PF00652">
    <property type="entry name" value="Ricin_B_lectin"/>
    <property type="match status" value="1"/>
</dbReference>
<dbReference type="PRINTS" id="PR00740">
    <property type="entry name" value="GLHYDRLASE27"/>
</dbReference>
<dbReference type="SMART" id="SM00458">
    <property type="entry name" value="RICIN"/>
    <property type="match status" value="1"/>
</dbReference>
<dbReference type="SUPFAM" id="SSF51445">
    <property type="entry name" value="(Trans)glycosidases"/>
    <property type="match status" value="1"/>
</dbReference>
<dbReference type="SUPFAM" id="SSF51011">
    <property type="entry name" value="Glycosyl hydrolase domain"/>
    <property type="match status" value="1"/>
</dbReference>
<dbReference type="SUPFAM" id="SSF50370">
    <property type="entry name" value="Ricin B-like lectins"/>
    <property type="match status" value="1"/>
</dbReference>
<dbReference type="PROSITE" id="PS50231">
    <property type="entry name" value="RICIN_B_LECTIN"/>
    <property type="match status" value="1"/>
</dbReference>
<feature type="signal peptide" evidence="2">
    <location>
        <begin position="1"/>
        <end position="17"/>
    </location>
</feature>
<feature type="chain" id="PRO_0000393213" description="Probable alpha-galactosidase A">
    <location>
        <begin position="18"/>
        <end position="525"/>
    </location>
</feature>
<feature type="domain" description="Ricin B-type lectin" evidence="3">
    <location>
        <begin position="402"/>
        <end position="525"/>
    </location>
</feature>
<feature type="active site" description="Nucleophile" evidence="1">
    <location>
        <position position="148"/>
    </location>
</feature>
<feature type="active site" description="Proton donor" evidence="1">
    <location>
        <position position="206"/>
    </location>
</feature>
<feature type="glycosylation site" description="N-linked (GlcNAc...) asparagine" evidence="2">
    <location>
        <position position="43"/>
    </location>
</feature>
<feature type="glycosylation site" description="N-linked (GlcNAc...) asparagine" evidence="2">
    <location>
        <position position="81"/>
    </location>
</feature>
<feature type="glycosylation site" description="N-linked (GlcNAc...) asparagine" evidence="2">
    <location>
        <position position="117"/>
    </location>
</feature>
<feature type="glycosylation site" description="N-linked (GlcNAc...) asparagine" evidence="2">
    <location>
        <position position="197"/>
    </location>
</feature>
<feature type="disulfide bond" evidence="3">
    <location>
        <begin position="40"/>
        <end position="72"/>
    </location>
</feature>
<feature type="disulfide bond" evidence="3">
    <location>
        <begin position="120"/>
        <end position="150"/>
    </location>
</feature>
<feature type="disulfide bond" evidence="3">
    <location>
        <begin position="422"/>
        <end position="434"/>
    </location>
</feature>
<feature type="disulfide bond" evidence="3">
    <location>
        <begin position="459"/>
        <end position="472"/>
    </location>
</feature>
<name>AGALA_ASPCL</name>
<protein>
    <recommendedName>
        <fullName>Probable alpha-galactosidase A</fullName>
        <ecNumber>3.2.1.22</ecNumber>
    </recommendedName>
    <alternativeName>
        <fullName>Melibiase A</fullName>
    </alternativeName>
</protein>
<gene>
    <name type="primary">aglA</name>
    <name type="ORF">ACLA_016820</name>
</gene>
<reference key="1">
    <citation type="journal article" date="2008" name="PLoS Genet.">
        <title>Genomic islands in the pathogenic filamentous fungus Aspergillus fumigatus.</title>
        <authorList>
            <person name="Fedorova N.D."/>
            <person name="Khaldi N."/>
            <person name="Joardar V.S."/>
            <person name="Maiti R."/>
            <person name="Amedeo P."/>
            <person name="Anderson M.J."/>
            <person name="Crabtree J."/>
            <person name="Silva J.C."/>
            <person name="Badger J.H."/>
            <person name="Albarraq A."/>
            <person name="Angiuoli S."/>
            <person name="Bussey H."/>
            <person name="Bowyer P."/>
            <person name="Cotty P.J."/>
            <person name="Dyer P.S."/>
            <person name="Egan A."/>
            <person name="Galens K."/>
            <person name="Fraser-Liggett C.M."/>
            <person name="Haas B.J."/>
            <person name="Inman J.M."/>
            <person name="Kent R."/>
            <person name="Lemieux S."/>
            <person name="Malavazi I."/>
            <person name="Orvis J."/>
            <person name="Roemer T."/>
            <person name="Ronning C.M."/>
            <person name="Sundaram J.P."/>
            <person name="Sutton G."/>
            <person name="Turner G."/>
            <person name="Venter J.C."/>
            <person name="White O.R."/>
            <person name="Whitty B.R."/>
            <person name="Youngman P."/>
            <person name="Wolfe K.H."/>
            <person name="Goldman G.H."/>
            <person name="Wortman J.R."/>
            <person name="Jiang B."/>
            <person name="Denning D.W."/>
            <person name="Nierman W.C."/>
        </authorList>
    </citation>
    <scope>NUCLEOTIDE SEQUENCE [LARGE SCALE GENOMIC DNA]</scope>
    <source>
        <strain>ATCC 1007 / CBS 513.65 / DSM 816 / NCTC 3887 / NRRL 1 / QM 1276 / 107</strain>
    </source>
</reference>
<evidence type="ECO:0000250" key="1"/>
<evidence type="ECO:0000255" key="2"/>
<evidence type="ECO:0000255" key="3">
    <source>
        <dbReference type="PROSITE-ProRule" id="PRU00174"/>
    </source>
</evidence>
<evidence type="ECO:0000305" key="4"/>
<keyword id="KW-1015">Disulfide bond</keyword>
<keyword id="KW-0325">Glycoprotein</keyword>
<keyword id="KW-0326">Glycosidase</keyword>
<keyword id="KW-0378">Hydrolase</keyword>
<keyword id="KW-0430">Lectin</keyword>
<keyword id="KW-1185">Reference proteome</keyword>
<keyword id="KW-0964">Secreted</keyword>
<keyword id="KW-0732">Signal</keyword>
<proteinExistence type="inferred from homology"/>
<sequence>MHPSMTLLAILPPLVRASIGNPHLLPTPPMGFNNWARFMCNLNESLFLDTAAAMLDTGLHAAGYTRLNLDDCWMASHRAPNGSLPWDPTKFPHSLPWLSAQLRSLGFSLGIYQDAGNVTCGGYPGSYGFEELDAHTFAEWGVDYLKLDGCNVSPAGAVSLADEYRARYARWHSVLGAMPHPLVFSESAPAYFVDPQNATAWYGVMDWVPAYGELARHSTDILVYEGEGSAWQSIMVNYRYNTLLARYQRPGYFNDPDFLIADHPGLSLVEKRSHFALWASFGAPLIISADVPGLSKEVIAVLTNADLIRVDQDALGLQATLASRSEHLDVLTRSLDGGDRLVTILNRGDGGLAVKVPVGWMGLQRCAYQAKNLWDGEIQEIEEDIEVQLDSHATEVFRVSLPPDCPMVIPTGIVFNTASGNCLTDGEALAFEPCRGQDLQVWQVEESGILRPLSRTSHCLTAIGDNVVVKPCTGRPGQRWTYHITGNLQNQHTGACLTEGTGIDVCGFELDSQVFGLPSGVDIEA</sequence>
<organism>
    <name type="scientific">Aspergillus clavatus (strain ATCC 1007 / CBS 513.65 / DSM 816 / NCTC 3887 / NRRL 1 / QM 1276 / 107)</name>
    <dbReference type="NCBI Taxonomy" id="344612"/>
    <lineage>
        <taxon>Eukaryota</taxon>
        <taxon>Fungi</taxon>
        <taxon>Dikarya</taxon>
        <taxon>Ascomycota</taxon>
        <taxon>Pezizomycotina</taxon>
        <taxon>Eurotiomycetes</taxon>
        <taxon>Eurotiomycetidae</taxon>
        <taxon>Eurotiales</taxon>
        <taxon>Aspergillaceae</taxon>
        <taxon>Aspergillus</taxon>
        <taxon>Aspergillus subgen. Fumigati</taxon>
    </lineage>
</organism>
<accession>A1CBW8</accession>
<comment type="function">
    <text evidence="1">Hydrolyzes a variety of simple alpha-D-galactoside as well as more complex molecules such as oligosaccharides and polysaccharides.</text>
</comment>
<comment type="catalytic activity">
    <reaction>
        <text>Hydrolysis of terminal, non-reducing alpha-D-galactose residues in alpha-D-galactosides, including galactose oligosaccharides, galactomannans and galactolipids.</text>
        <dbReference type="EC" id="3.2.1.22"/>
    </reaction>
</comment>
<comment type="subcellular location">
    <subcellularLocation>
        <location evidence="1">Secreted</location>
    </subcellularLocation>
</comment>
<comment type="similarity">
    <text evidence="4">Belongs to the glycosyl hydrolase 27 family.</text>
</comment>